<comment type="subcellular location">
    <subcellularLocation>
        <location evidence="2">Endoplasmic reticulum membrane</location>
        <topology evidence="2">Multi-pass membrane protein</topology>
    </subcellularLocation>
</comment>
<comment type="similarity">
    <text evidence="3">Belongs to the derlin family.</text>
</comment>
<reference key="1">
    <citation type="journal article" date="2002" name="Nature">
        <title>The genome sequence of Schizosaccharomyces pombe.</title>
        <authorList>
            <person name="Wood V."/>
            <person name="Gwilliam R."/>
            <person name="Rajandream M.A."/>
            <person name="Lyne M.H."/>
            <person name="Lyne R."/>
            <person name="Stewart A."/>
            <person name="Sgouros J.G."/>
            <person name="Peat N."/>
            <person name="Hayles J."/>
            <person name="Baker S.G."/>
            <person name="Basham D."/>
            <person name="Bowman S."/>
            <person name="Brooks K."/>
            <person name="Brown D."/>
            <person name="Brown S."/>
            <person name="Chillingworth T."/>
            <person name="Churcher C.M."/>
            <person name="Collins M."/>
            <person name="Connor R."/>
            <person name="Cronin A."/>
            <person name="Davis P."/>
            <person name="Feltwell T."/>
            <person name="Fraser A."/>
            <person name="Gentles S."/>
            <person name="Goble A."/>
            <person name="Hamlin N."/>
            <person name="Harris D.E."/>
            <person name="Hidalgo J."/>
            <person name="Hodgson G."/>
            <person name="Holroyd S."/>
            <person name="Hornsby T."/>
            <person name="Howarth S."/>
            <person name="Huckle E.J."/>
            <person name="Hunt S."/>
            <person name="Jagels K."/>
            <person name="James K.D."/>
            <person name="Jones L."/>
            <person name="Jones M."/>
            <person name="Leather S."/>
            <person name="McDonald S."/>
            <person name="McLean J."/>
            <person name="Mooney P."/>
            <person name="Moule S."/>
            <person name="Mungall K.L."/>
            <person name="Murphy L.D."/>
            <person name="Niblett D."/>
            <person name="Odell C."/>
            <person name="Oliver K."/>
            <person name="O'Neil S."/>
            <person name="Pearson D."/>
            <person name="Quail M.A."/>
            <person name="Rabbinowitsch E."/>
            <person name="Rutherford K.M."/>
            <person name="Rutter S."/>
            <person name="Saunders D."/>
            <person name="Seeger K."/>
            <person name="Sharp S."/>
            <person name="Skelton J."/>
            <person name="Simmonds M.N."/>
            <person name="Squares R."/>
            <person name="Squares S."/>
            <person name="Stevens K."/>
            <person name="Taylor K."/>
            <person name="Taylor R.G."/>
            <person name="Tivey A."/>
            <person name="Walsh S.V."/>
            <person name="Warren T."/>
            <person name="Whitehead S."/>
            <person name="Woodward J.R."/>
            <person name="Volckaert G."/>
            <person name="Aert R."/>
            <person name="Robben J."/>
            <person name="Grymonprez B."/>
            <person name="Weltjens I."/>
            <person name="Vanstreels E."/>
            <person name="Rieger M."/>
            <person name="Schaefer M."/>
            <person name="Mueller-Auer S."/>
            <person name="Gabel C."/>
            <person name="Fuchs M."/>
            <person name="Duesterhoeft A."/>
            <person name="Fritzc C."/>
            <person name="Holzer E."/>
            <person name="Moestl D."/>
            <person name="Hilbert H."/>
            <person name="Borzym K."/>
            <person name="Langer I."/>
            <person name="Beck A."/>
            <person name="Lehrach H."/>
            <person name="Reinhardt R."/>
            <person name="Pohl T.M."/>
            <person name="Eger P."/>
            <person name="Zimmermann W."/>
            <person name="Wedler H."/>
            <person name="Wambutt R."/>
            <person name="Purnelle B."/>
            <person name="Goffeau A."/>
            <person name="Cadieu E."/>
            <person name="Dreano S."/>
            <person name="Gloux S."/>
            <person name="Lelaure V."/>
            <person name="Mottier S."/>
            <person name="Galibert F."/>
            <person name="Aves S.J."/>
            <person name="Xiang Z."/>
            <person name="Hunt C."/>
            <person name="Moore K."/>
            <person name="Hurst S.M."/>
            <person name="Lucas M."/>
            <person name="Rochet M."/>
            <person name="Gaillardin C."/>
            <person name="Tallada V.A."/>
            <person name="Garzon A."/>
            <person name="Thode G."/>
            <person name="Daga R.R."/>
            <person name="Cruzado L."/>
            <person name="Jimenez J."/>
            <person name="Sanchez M."/>
            <person name="del Rey F."/>
            <person name="Benito J."/>
            <person name="Dominguez A."/>
            <person name="Revuelta J.L."/>
            <person name="Moreno S."/>
            <person name="Armstrong J."/>
            <person name="Forsburg S.L."/>
            <person name="Cerutti L."/>
            <person name="Lowe T."/>
            <person name="McCombie W.R."/>
            <person name="Paulsen I."/>
            <person name="Potashkin J."/>
            <person name="Shpakovski G.V."/>
            <person name="Ussery D."/>
            <person name="Barrell B.G."/>
            <person name="Nurse P."/>
        </authorList>
    </citation>
    <scope>NUCLEOTIDE SEQUENCE [LARGE SCALE GENOMIC DNA]</scope>
    <source>
        <strain>972 / ATCC 24843</strain>
    </source>
</reference>
<reference key="2">
    <citation type="journal article" date="2011" name="Science">
        <title>Comparative functional genomics of the fission yeasts.</title>
        <authorList>
            <person name="Rhind N."/>
            <person name="Chen Z."/>
            <person name="Yassour M."/>
            <person name="Thompson D.A."/>
            <person name="Haas B.J."/>
            <person name="Habib N."/>
            <person name="Wapinski I."/>
            <person name="Roy S."/>
            <person name="Lin M.F."/>
            <person name="Heiman D.I."/>
            <person name="Young S.K."/>
            <person name="Furuya K."/>
            <person name="Guo Y."/>
            <person name="Pidoux A."/>
            <person name="Chen H.M."/>
            <person name="Robbertse B."/>
            <person name="Goldberg J.M."/>
            <person name="Aoki K."/>
            <person name="Bayne E.H."/>
            <person name="Berlin A.M."/>
            <person name="Desjardins C.A."/>
            <person name="Dobbs E."/>
            <person name="Dukaj L."/>
            <person name="Fan L."/>
            <person name="FitzGerald M.G."/>
            <person name="French C."/>
            <person name="Gujja S."/>
            <person name="Hansen K."/>
            <person name="Keifenheim D."/>
            <person name="Levin J.Z."/>
            <person name="Mosher R.A."/>
            <person name="Mueller C.A."/>
            <person name="Pfiffner J."/>
            <person name="Priest M."/>
            <person name="Russ C."/>
            <person name="Smialowska A."/>
            <person name="Swoboda P."/>
            <person name="Sykes S.M."/>
            <person name="Vaughn M."/>
            <person name="Vengrova S."/>
            <person name="Yoder R."/>
            <person name="Zeng Q."/>
            <person name="Allshire R."/>
            <person name="Baulcombe D."/>
            <person name="Birren B.W."/>
            <person name="Brown W."/>
            <person name="Ekwall K."/>
            <person name="Kellis M."/>
            <person name="Leatherwood J."/>
            <person name="Levin H."/>
            <person name="Margalit H."/>
            <person name="Martienssen R."/>
            <person name="Nieduszynski C.A."/>
            <person name="Spatafora J.W."/>
            <person name="Friedman N."/>
            <person name="Dalgaard J.Z."/>
            <person name="Baumann P."/>
            <person name="Niki H."/>
            <person name="Regev A."/>
            <person name="Nusbaum C."/>
        </authorList>
    </citation>
    <scope>REVISION OF GENE MODEL</scope>
</reference>
<reference key="3">
    <citation type="journal article" date="2006" name="Nat. Biotechnol.">
        <title>ORFeome cloning and global analysis of protein localization in the fission yeast Schizosaccharomyces pombe.</title>
        <authorList>
            <person name="Matsuyama A."/>
            <person name="Arai R."/>
            <person name="Yashiroda Y."/>
            <person name="Shirai A."/>
            <person name="Kamata A."/>
            <person name="Sekido S."/>
            <person name="Kobayashi Y."/>
            <person name="Hashimoto A."/>
            <person name="Hamamoto M."/>
            <person name="Hiraoka Y."/>
            <person name="Horinouchi S."/>
            <person name="Yoshida M."/>
        </authorList>
    </citation>
    <scope>SUBCELLULAR LOCATION [LARGE SCALE ANALYSIS]</scope>
</reference>
<name>YFFH_SCHPO</name>
<organism>
    <name type="scientific">Schizosaccharomyces pombe (strain 972 / ATCC 24843)</name>
    <name type="common">Fission yeast</name>
    <dbReference type="NCBI Taxonomy" id="284812"/>
    <lineage>
        <taxon>Eukaryota</taxon>
        <taxon>Fungi</taxon>
        <taxon>Dikarya</taxon>
        <taxon>Ascomycota</taxon>
        <taxon>Taphrinomycotina</taxon>
        <taxon>Schizosaccharomycetes</taxon>
        <taxon>Schizosaccharomycetales</taxon>
        <taxon>Schizosaccharomycetaceae</taxon>
        <taxon>Schizosaccharomyces</taxon>
    </lineage>
</organism>
<feature type="chain" id="PRO_0000351083" description="Uncharacterized derlin-like protein C1687.17c">
    <location>
        <begin position="1"/>
        <end position="190"/>
    </location>
</feature>
<feature type="topological domain" description="Cytoplasmic" evidence="1">
    <location>
        <begin position="1"/>
        <end position="16"/>
    </location>
</feature>
<feature type="transmembrane region" description="Helical" evidence="1">
    <location>
        <begin position="17"/>
        <end position="37"/>
    </location>
</feature>
<feature type="topological domain" description="Lumenal" evidence="1">
    <location>
        <begin position="38"/>
        <end position="55"/>
    </location>
</feature>
<feature type="transmembrane region" description="Helical" evidence="1">
    <location>
        <begin position="56"/>
        <end position="76"/>
    </location>
</feature>
<feature type="topological domain" description="Cytoplasmic" evidence="1">
    <location>
        <begin position="77"/>
        <end position="98"/>
    </location>
</feature>
<feature type="transmembrane region" description="Helical" evidence="1">
    <location>
        <begin position="99"/>
        <end position="119"/>
    </location>
</feature>
<feature type="topological domain" description="Lumenal" evidence="1">
    <location>
        <begin position="120"/>
        <end position="138"/>
    </location>
</feature>
<feature type="transmembrane region" description="Helical" evidence="1">
    <location>
        <begin position="139"/>
        <end position="159"/>
    </location>
</feature>
<feature type="topological domain" description="Cytoplasmic" evidence="1">
    <location>
        <begin position="160"/>
        <end position="163"/>
    </location>
</feature>
<feature type="transmembrane region" description="Helical" evidence="1">
    <location>
        <begin position="164"/>
        <end position="184"/>
    </location>
</feature>
<feature type="topological domain" description="Lumenal" evidence="1">
    <location>
        <begin position="185"/>
        <end position="190"/>
    </location>
</feature>
<proteinExistence type="inferred from homology"/>
<keyword id="KW-0256">Endoplasmic reticulum</keyword>
<keyword id="KW-0472">Membrane</keyword>
<keyword id="KW-1185">Reference proteome</keyword>
<keyword id="KW-0812">Transmembrane</keyword>
<keyword id="KW-1133">Transmembrane helix</keyword>
<sequence length="190" mass="22236">MAILPEFISQTPPVTRYIVLGTLFTTLAVNFGYVSDLKIFFNWKLFLAKGEYWRAITTFLYVGPFGLELILYLSFLLRFMSMLERSSPPPQTQSFLKTVLIVWFSLLVTSYFSYMPFAASYFSFTMLYIWSWKHPLYRISILGLFDVKAPYVPWVMVLLRWLRTGIFPLLDLISALIGHVYFFVTDFSTV</sequence>
<protein>
    <recommendedName>
        <fullName>Uncharacterized derlin-like protein C1687.17c</fullName>
    </recommendedName>
</protein>
<gene>
    <name type="ORF">SPAC1687.17c</name>
</gene>
<accession>O94458</accession>
<evidence type="ECO:0000255" key="1"/>
<evidence type="ECO:0000269" key="2">
    <source>
    </source>
</evidence>
<evidence type="ECO:0000305" key="3"/>
<dbReference type="EMBL" id="CU329670">
    <property type="protein sequence ID" value="CAA22611.2"/>
    <property type="molecule type" value="Genomic_DNA"/>
</dbReference>
<dbReference type="PIR" id="T37760">
    <property type="entry name" value="T37760"/>
</dbReference>
<dbReference type="RefSeq" id="NP_593136.2">
    <property type="nucleotide sequence ID" value="NM_001018532.2"/>
</dbReference>
<dbReference type="SMR" id="O94458"/>
<dbReference type="BioGRID" id="278843">
    <property type="interactions" value="5"/>
</dbReference>
<dbReference type="FunCoup" id="O94458">
    <property type="interactions" value="226"/>
</dbReference>
<dbReference type="STRING" id="284812.O94458"/>
<dbReference type="PaxDb" id="4896-SPAC1687.17c.1"/>
<dbReference type="EnsemblFungi" id="SPAC1687.17c.1">
    <property type="protein sequence ID" value="SPAC1687.17c.1:pep"/>
    <property type="gene ID" value="SPAC1687.17c"/>
</dbReference>
<dbReference type="KEGG" id="spo:2542379"/>
<dbReference type="PomBase" id="SPAC1687.17c"/>
<dbReference type="VEuPathDB" id="FungiDB:SPAC1687.17c"/>
<dbReference type="eggNOG" id="KOG0858">
    <property type="taxonomic scope" value="Eukaryota"/>
</dbReference>
<dbReference type="HOGENOM" id="CLU_051898_1_2_1"/>
<dbReference type="InParanoid" id="O94458"/>
<dbReference type="OMA" id="FKSQYWR"/>
<dbReference type="PRO" id="PR:O94458"/>
<dbReference type="Proteomes" id="UP000002485">
    <property type="component" value="Chromosome I"/>
</dbReference>
<dbReference type="GO" id="GO:0005783">
    <property type="term" value="C:endoplasmic reticulum"/>
    <property type="evidence" value="ECO:0007005"/>
    <property type="project" value="PomBase"/>
</dbReference>
<dbReference type="GO" id="GO:0005789">
    <property type="term" value="C:endoplasmic reticulum membrane"/>
    <property type="evidence" value="ECO:0000318"/>
    <property type="project" value="GO_Central"/>
</dbReference>
<dbReference type="GO" id="GO:0005047">
    <property type="term" value="F:signal recognition particle binding"/>
    <property type="evidence" value="ECO:0000318"/>
    <property type="project" value="GO_Central"/>
</dbReference>
<dbReference type="GO" id="GO:0030968">
    <property type="term" value="P:endoplasmic reticulum unfolded protein response"/>
    <property type="evidence" value="ECO:0000318"/>
    <property type="project" value="GO_Central"/>
</dbReference>
<dbReference type="GO" id="GO:0036503">
    <property type="term" value="P:ERAD pathway"/>
    <property type="evidence" value="ECO:0000318"/>
    <property type="project" value="GO_Central"/>
</dbReference>
<dbReference type="InterPro" id="IPR007599">
    <property type="entry name" value="DER1"/>
</dbReference>
<dbReference type="InterPro" id="IPR035952">
    <property type="entry name" value="Rhomboid-like_sf"/>
</dbReference>
<dbReference type="PANTHER" id="PTHR11009">
    <property type="entry name" value="DER1-LIKE PROTEIN, DERLIN"/>
    <property type="match status" value="1"/>
</dbReference>
<dbReference type="Pfam" id="PF04511">
    <property type="entry name" value="DER1"/>
    <property type="match status" value="1"/>
</dbReference>
<dbReference type="SUPFAM" id="SSF144091">
    <property type="entry name" value="Rhomboid-like"/>
    <property type="match status" value="1"/>
</dbReference>